<keyword id="KW-1185">Reference proteome</keyword>
<keyword id="KW-0677">Repeat</keyword>
<keyword id="KW-0808">Transferase</keyword>
<keyword id="KW-0833">Ubl conjugation pathway</keyword>
<proteinExistence type="evidence at transcript level"/>
<accession>Q9FHN9</accession>
<accession>O49529</accession>
<accession>Q8W4M3</accession>
<gene>
    <name type="primary">PUB31</name>
    <name type="ordered locus">At5g65920</name>
    <name type="ORF">F6H11.10</name>
    <name type="ORF">K14B20.9</name>
</gene>
<evidence type="ECO:0000250" key="1"/>
<evidence type="ECO:0000305" key="2"/>
<sequence>MPMFQPSKNGGFDGHILDLHSAVKDGVLGGGDGKFLVVVTDEKKKLDLKEMISELELPEIPSVFICPISLEPMQDPVTLCTGQTYERSNILKWFNIGHCTCPTTMQELWDDLVTPNKTLHQLIYTWFSQKYVLMKKRSEDVQGRAIEILGTLRKAKGKAKVHALSELKQVVMAHAIAKKTVVDEGGVFVISSLLSPFTSHAVGSEAIAILVNLELDSDSKAGLMQPARVSLMVDMLNDGSIETKINCARLIGRLVEEKGFRAELVSSHSLLVGLMRLVKDRRRRNGVSPALTLLKSVSVHKQVRNLLVRIGAVPQLVDVLPCLDVECLESALFVLDSLCLESEGRIALKDSVNTIPHTVRLLMKVSEKCTNYAISILWSVCKLASEECSSLAVEVGLAAKLLLVIQSGCDPALKQRSAELLKLCSLHYSDSMFISKCKLTRTIQ</sequence>
<organism>
    <name type="scientific">Arabidopsis thaliana</name>
    <name type="common">Mouse-ear cress</name>
    <dbReference type="NCBI Taxonomy" id="3702"/>
    <lineage>
        <taxon>Eukaryota</taxon>
        <taxon>Viridiplantae</taxon>
        <taxon>Streptophyta</taxon>
        <taxon>Embryophyta</taxon>
        <taxon>Tracheophyta</taxon>
        <taxon>Spermatophyta</taxon>
        <taxon>Magnoliopsida</taxon>
        <taxon>eudicotyledons</taxon>
        <taxon>Gunneridae</taxon>
        <taxon>Pentapetalae</taxon>
        <taxon>rosids</taxon>
        <taxon>malvids</taxon>
        <taxon>Brassicales</taxon>
        <taxon>Brassicaceae</taxon>
        <taxon>Camelineae</taxon>
        <taxon>Arabidopsis</taxon>
    </lineage>
</organism>
<feature type="chain" id="PRO_0000322175" description="U-box domain-containing protein 31">
    <location>
        <begin position="1"/>
        <end position="444"/>
    </location>
</feature>
<feature type="domain" description="U-box">
    <location>
        <begin position="59"/>
        <end position="133"/>
    </location>
</feature>
<feature type="repeat" description="ARM 1">
    <location>
        <begin position="301"/>
        <end position="340"/>
    </location>
</feature>
<feature type="repeat" description="ARM 2">
    <location>
        <begin position="343"/>
        <end position="382"/>
    </location>
</feature>
<feature type="sequence conflict" description="In Ref. 4; AAL32554/AAM13258." evidence="2" ref="4">
    <original>E</original>
    <variation>G</variation>
    <location>
        <position position="184"/>
    </location>
</feature>
<name>PUB31_ARATH</name>
<reference key="1">
    <citation type="journal article" date="2000" name="DNA Res.">
        <title>Structural analysis of Arabidopsis thaliana chromosome 5. X. Sequence features of the regions of 3,076,755 bp covered by sixty P1 and TAC clones.</title>
        <authorList>
            <person name="Sato S."/>
            <person name="Nakamura Y."/>
            <person name="Kaneko T."/>
            <person name="Katoh T."/>
            <person name="Asamizu E."/>
            <person name="Kotani H."/>
            <person name="Tabata S."/>
        </authorList>
    </citation>
    <scope>NUCLEOTIDE SEQUENCE [LARGE SCALE GENOMIC DNA]</scope>
    <source>
        <strain>cv. Columbia</strain>
    </source>
</reference>
<reference key="2">
    <citation type="journal article" date="2000" name="Nature">
        <title>Sequence and analysis of chromosome 5 of the plant Arabidopsis thaliana.</title>
        <authorList>
            <person name="Tabata S."/>
            <person name="Kaneko T."/>
            <person name="Nakamura Y."/>
            <person name="Kotani H."/>
            <person name="Kato T."/>
            <person name="Asamizu E."/>
            <person name="Miyajima N."/>
            <person name="Sasamoto S."/>
            <person name="Kimura T."/>
            <person name="Hosouchi T."/>
            <person name="Kawashima K."/>
            <person name="Kohara M."/>
            <person name="Matsumoto M."/>
            <person name="Matsuno A."/>
            <person name="Muraki A."/>
            <person name="Nakayama S."/>
            <person name="Nakazaki N."/>
            <person name="Naruo K."/>
            <person name="Okumura S."/>
            <person name="Shinpo S."/>
            <person name="Takeuchi C."/>
            <person name="Wada T."/>
            <person name="Watanabe A."/>
            <person name="Yamada M."/>
            <person name="Yasuda M."/>
            <person name="Sato S."/>
            <person name="de la Bastide M."/>
            <person name="Huang E."/>
            <person name="Spiegel L."/>
            <person name="Gnoj L."/>
            <person name="O'Shaughnessy A."/>
            <person name="Preston R."/>
            <person name="Habermann K."/>
            <person name="Murray J."/>
            <person name="Johnson D."/>
            <person name="Rohlfing T."/>
            <person name="Nelson J."/>
            <person name="Stoneking T."/>
            <person name="Pepin K."/>
            <person name="Spieth J."/>
            <person name="Sekhon M."/>
            <person name="Armstrong J."/>
            <person name="Becker M."/>
            <person name="Belter E."/>
            <person name="Cordum H."/>
            <person name="Cordes M."/>
            <person name="Courtney L."/>
            <person name="Courtney W."/>
            <person name="Dante M."/>
            <person name="Du H."/>
            <person name="Edwards J."/>
            <person name="Fryman J."/>
            <person name="Haakensen B."/>
            <person name="Lamar E."/>
            <person name="Latreille P."/>
            <person name="Leonard S."/>
            <person name="Meyer R."/>
            <person name="Mulvaney E."/>
            <person name="Ozersky P."/>
            <person name="Riley A."/>
            <person name="Strowmatt C."/>
            <person name="Wagner-McPherson C."/>
            <person name="Wollam A."/>
            <person name="Yoakum M."/>
            <person name="Bell M."/>
            <person name="Dedhia N."/>
            <person name="Parnell L."/>
            <person name="Shah R."/>
            <person name="Rodriguez M."/>
            <person name="Hoon See L."/>
            <person name="Vil D."/>
            <person name="Baker J."/>
            <person name="Kirchoff K."/>
            <person name="Toth K."/>
            <person name="King L."/>
            <person name="Bahret A."/>
            <person name="Miller B."/>
            <person name="Marra M.A."/>
            <person name="Martienssen R."/>
            <person name="McCombie W.R."/>
            <person name="Wilson R.K."/>
            <person name="Murphy G."/>
            <person name="Bancroft I."/>
            <person name="Volckaert G."/>
            <person name="Wambutt R."/>
            <person name="Duesterhoeft A."/>
            <person name="Stiekema W."/>
            <person name="Pohl T."/>
            <person name="Entian K.-D."/>
            <person name="Terryn N."/>
            <person name="Hartley N."/>
            <person name="Bent E."/>
            <person name="Johnson S."/>
            <person name="Langham S.-A."/>
            <person name="McCullagh B."/>
            <person name="Robben J."/>
            <person name="Grymonprez B."/>
            <person name="Zimmermann W."/>
            <person name="Ramsperger U."/>
            <person name="Wedler H."/>
            <person name="Balke K."/>
            <person name="Wedler E."/>
            <person name="Peters S."/>
            <person name="van Staveren M."/>
            <person name="Dirkse W."/>
            <person name="Mooijman P."/>
            <person name="Klein Lankhorst R."/>
            <person name="Weitzenegger T."/>
            <person name="Bothe G."/>
            <person name="Rose M."/>
            <person name="Hauf J."/>
            <person name="Berneiser S."/>
            <person name="Hempel S."/>
            <person name="Feldpausch M."/>
            <person name="Lamberth S."/>
            <person name="Villarroel R."/>
            <person name="Gielen J."/>
            <person name="Ardiles W."/>
            <person name="Bents O."/>
            <person name="Lemcke K."/>
            <person name="Kolesov G."/>
            <person name="Mayer K.F.X."/>
            <person name="Rudd S."/>
            <person name="Schoof H."/>
            <person name="Schueller C."/>
            <person name="Zaccaria P."/>
            <person name="Mewes H.-W."/>
            <person name="Bevan M."/>
            <person name="Fransz P.F."/>
        </authorList>
    </citation>
    <scope>NUCLEOTIDE SEQUENCE [LARGE SCALE GENOMIC DNA]</scope>
    <source>
        <strain>cv. Columbia</strain>
    </source>
</reference>
<reference key="3">
    <citation type="journal article" date="2017" name="Plant J.">
        <title>Araport11: a complete reannotation of the Arabidopsis thaliana reference genome.</title>
        <authorList>
            <person name="Cheng C.Y."/>
            <person name="Krishnakumar V."/>
            <person name="Chan A.P."/>
            <person name="Thibaud-Nissen F."/>
            <person name="Schobel S."/>
            <person name="Town C.D."/>
        </authorList>
    </citation>
    <scope>GENOME REANNOTATION</scope>
    <source>
        <strain>cv. Columbia</strain>
    </source>
</reference>
<reference key="4">
    <citation type="journal article" date="2003" name="Science">
        <title>Empirical analysis of transcriptional activity in the Arabidopsis genome.</title>
        <authorList>
            <person name="Yamada K."/>
            <person name="Lim J."/>
            <person name="Dale J.M."/>
            <person name="Chen H."/>
            <person name="Shinn P."/>
            <person name="Palm C.J."/>
            <person name="Southwick A.M."/>
            <person name="Wu H.C."/>
            <person name="Kim C.J."/>
            <person name="Nguyen M."/>
            <person name="Pham P.K."/>
            <person name="Cheuk R.F."/>
            <person name="Karlin-Newmann G."/>
            <person name="Liu S.X."/>
            <person name="Lam B."/>
            <person name="Sakano H."/>
            <person name="Wu T."/>
            <person name="Yu G."/>
            <person name="Miranda M."/>
            <person name="Quach H.L."/>
            <person name="Tripp M."/>
            <person name="Chang C.H."/>
            <person name="Lee J.M."/>
            <person name="Toriumi M.J."/>
            <person name="Chan M.M."/>
            <person name="Tang C.C."/>
            <person name="Onodera C.S."/>
            <person name="Deng J.M."/>
            <person name="Akiyama K."/>
            <person name="Ansari Y."/>
            <person name="Arakawa T."/>
            <person name="Banh J."/>
            <person name="Banno F."/>
            <person name="Bowser L."/>
            <person name="Brooks S.Y."/>
            <person name="Carninci P."/>
            <person name="Chao Q."/>
            <person name="Choy N."/>
            <person name="Enju A."/>
            <person name="Goldsmith A.D."/>
            <person name="Gurjal M."/>
            <person name="Hansen N.F."/>
            <person name="Hayashizaki Y."/>
            <person name="Johnson-Hopson C."/>
            <person name="Hsuan V.W."/>
            <person name="Iida K."/>
            <person name="Karnes M."/>
            <person name="Khan S."/>
            <person name="Koesema E."/>
            <person name="Ishida J."/>
            <person name="Jiang P.X."/>
            <person name="Jones T."/>
            <person name="Kawai J."/>
            <person name="Kamiya A."/>
            <person name="Meyers C."/>
            <person name="Nakajima M."/>
            <person name="Narusaka M."/>
            <person name="Seki M."/>
            <person name="Sakurai T."/>
            <person name="Satou M."/>
            <person name="Tamse R."/>
            <person name="Vaysberg M."/>
            <person name="Wallender E.K."/>
            <person name="Wong C."/>
            <person name="Yamamura Y."/>
            <person name="Yuan S."/>
            <person name="Shinozaki K."/>
            <person name="Davis R.W."/>
            <person name="Theologis A."/>
            <person name="Ecker J.R."/>
        </authorList>
    </citation>
    <scope>NUCLEOTIDE SEQUENCE [LARGE SCALE MRNA]</scope>
    <source>
        <strain>cv. Columbia</strain>
    </source>
</reference>
<reference key="5">
    <citation type="journal article" date="2001" name="Trends Plant Sci.">
        <title>The U-box protein family in plants.</title>
        <authorList>
            <person name="Azevedo C."/>
            <person name="Santos-Rosa M.J."/>
            <person name="Shirasu K."/>
        </authorList>
    </citation>
    <scope>GENE FAMILY ORGANIZATION</scope>
    <scope>NOMENCLATURE</scope>
</reference>
<reference key="6">
    <citation type="journal article" date="2004" name="Plant Physiol.">
        <title>A large complement of the predicted Arabidopsis ARM repeat proteins are members of the U-box E3 ubiquitin ligase family.</title>
        <authorList>
            <person name="Mudgil Y."/>
            <person name="Shiu S.-H."/>
            <person name="Stone S.L."/>
            <person name="Salt J.N."/>
            <person name="Goring D.R."/>
        </authorList>
    </citation>
    <scope>GENE FAMILY ORGANIZATION</scope>
</reference>
<comment type="function">
    <text evidence="1">Functions as an E3 ubiquitin ligase.</text>
</comment>
<comment type="catalytic activity">
    <reaction>
        <text>S-ubiquitinyl-[E2 ubiquitin-conjugating enzyme]-L-cysteine + [acceptor protein]-L-lysine = [E2 ubiquitin-conjugating enzyme]-L-cysteine + N(6)-ubiquitinyl-[acceptor protein]-L-lysine.</text>
        <dbReference type="EC" id="2.3.2.27"/>
    </reaction>
</comment>
<comment type="pathway">
    <text>Protein modification; protein ubiquitination.</text>
</comment>
<comment type="sequence caution" evidence="2">
    <conflict type="erroneous gene model prediction">
        <sequence resource="EMBL-CDS" id="CAA16672"/>
    </conflict>
</comment>
<protein>
    <recommendedName>
        <fullName>U-box domain-containing protein 31</fullName>
        <ecNumber>2.3.2.27</ecNumber>
    </recommendedName>
    <alternativeName>
        <fullName>Plant U-box protein 31</fullName>
    </alternativeName>
    <alternativeName>
        <fullName evidence="2">RING-type E3 ubiquitin transferase PUB31</fullName>
    </alternativeName>
</protein>
<dbReference type="EC" id="2.3.2.27"/>
<dbReference type="EMBL" id="AB018108">
    <property type="protein sequence ID" value="BAB11139.1"/>
    <property type="molecule type" value="Genomic_DNA"/>
</dbReference>
<dbReference type="EMBL" id="AL021684">
    <property type="protein sequence ID" value="CAA16672.1"/>
    <property type="status" value="ALT_SEQ"/>
    <property type="molecule type" value="Genomic_DNA"/>
</dbReference>
<dbReference type="EMBL" id="CP002688">
    <property type="protein sequence ID" value="AED98123.1"/>
    <property type="molecule type" value="Genomic_DNA"/>
</dbReference>
<dbReference type="EMBL" id="CP002688">
    <property type="protein sequence ID" value="ANM68939.1"/>
    <property type="molecule type" value="Genomic_DNA"/>
</dbReference>
<dbReference type="EMBL" id="AY062476">
    <property type="protein sequence ID" value="AAL32554.1"/>
    <property type="molecule type" value="mRNA"/>
</dbReference>
<dbReference type="EMBL" id="AY093259">
    <property type="protein sequence ID" value="AAM13258.1"/>
    <property type="molecule type" value="mRNA"/>
</dbReference>
<dbReference type="PIR" id="T05882">
    <property type="entry name" value="T05882"/>
</dbReference>
<dbReference type="RefSeq" id="NP_001330653.1">
    <property type="nucleotide sequence ID" value="NM_001345727.1"/>
</dbReference>
<dbReference type="RefSeq" id="NP_201393.1">
    <property type="nucleotide sequence ID" value="NM_125989.4"/>
</dbReference>
<dbReference type="SMR" id="Q9FHN9"/>
<dbReference type="FunCoup" id="Q9FHN9">
    <property type="interactions" value="254"/>
</dbReference>
<dbReference type="STRING" id="3702.Q9FHN9"/>
<dbReference type="PaxDb" id="3702-AT5G65920.1"/>
<dbReference type="EnsemblPlants" id="AT5G65920.1">
    <property type="protein sequence ID" value="AT5G65920.1"/>
    <property type="gene ID" value="AT5G65920"/>
</dbReference>
<dbReference type="EnsemblPlants" id="AT5G65920.2">
    <property type="protein sequence ID" value="AT5G65920.2"/>
    <property type="gene ID" value="AT5G65920"/>
</dbReference>
<dbReference type="GeneID" id="836721"/>
<dbReference type="Gramene" id="AT5G65920.1">
    <property type="protein sequence ID" value="AT5G65920.1"/>
    <property type="gene ID" value="AT5G65920"/>
</dbReference>
<dbReference type="Gramene" id="AT5G65920.2">
    <property type="protein sequence ID" value="AT5G65920.2"/>
    <property type="gene ID" value="AT5G65920"/>
</dbReference>
<dbReference type="KEGG" id="ath:AT5G65920"/>
<dbReference type="Araport" id="AT5G65920"/>
<dbReference type="TAIR" id="AT5G65920">
    <property type="gene designation" value="PUB31"/>
</dbReference>
<dbReference type="eggNOG" id="ENOG502QTEJ">
    <property type="taxonomic scope" value="Eukaryota"/>
</dbReference>
<dbReference type="HOGENOM" id="CLU_006348_1_2_1"/>
<dbReference type="InParanoid" id="Q9FHN9"/>
<dbReference type="OMA" id="NDCEDPE"/>
<dbReference type="PhylomeDB" id="Q9FHN9"/>
<dbReference type="UniPathway" id="UPA00143"/>
<dbReference type="PRO" id="PR:Q9FHN9"/>
<dbReference type="Proteomes" id="UP000006548">
    <property type="component" value="Chromosome 5"/>
</dbReference>
<dbReference type="ExpressionAtlas" id="Q9FHN9">
    <property type="expression patterns" value="baseline and differential"/>
</dbReference>
<dbReference type="GO" id="GO:0061630">
    <property type="term" value="F:ubiquitin protein ligase activity"/>
    <property type="evidence" value="ECO:0007669"/>
    <property type="project" value="InterPro"/>
</dbReference>
<dbReference type="GO" id="GO:0016567">
    <property type="term" value="P:protein ubiquitination"/>
    <property type="evidence" value="ECO:0007669"/>
    <property type="project" value="UniProtKB-UniPathway"/>
</dbReference>
<dbReference type="CDD" id="cd16664">
    <property type="entry name" value="RING-Ubox_PUB"/>
    <property type="match status" value="1"/>
</dbReference>
<dbReference type="Gene3D" id="1.25.10.10">
    <property type="entry name" value="Leucine-rich Repeat Variant"/>
    <property type="match status" value="1"/>
</dbReference>
<dbReference type="Gene3D" id="3.30.40.10">
    <property type="entry name" value="Zinc/RING finger domain, C3HC4 (zinc finger)"/>
    <property type="match status" value="1"/>
</dbReference>
<dbReference type="InterPro" id="IPR011989">
    <property type="entry name" value="ARM-like"/>
</dbReference>
<dbReference type="InterPro" id="IPR016024">
    <property type="entry name" value="ARM-type_fold"/>
</dbReference>
<dbReference type="InterPro" id="IPR045185">
    <property type="entry name" value="PUB22/23/24-like"/>
</dbReference>
<dbReference type="InterPro" id="IPR045210">
    <property type="entry name" value="RING-Ubox_PUB"/>
</dbReference>
<dbReference type="InterPro" id="IPR003613">
    <property type="entry name" value="Ubox_domain"/>
</dbReference>
<dbReference type="InterPro" id="IPR013083">
    <property type="entry name" value="Znf_RING/FYVE/PHD"/>
</dbReference>
<dbReference type="PANTHER" id="PTHR22849:SF142">
    <property type="entry name" value="U-BOX DOMAIN-CONTAINING PROTEIN 31"/>
    <property type="match status" value="1"/>
</dbReference>
<dbReference type="PANTHER" id="PTHR22849">
    <property type="entry name" value="WDSAM1 PROTEIN"/>
    <property type="match status" value="1"/>
</dbReference>
<dbReference type="Pfam" id="PF04564">
    <property type="entry name" value="U-box"/>
    <property type="match status" value="1"/>
</dbReference>
<dbReference type="SMART" id="SM00504">
    <property type="entry name" value="Ubox"/>
    <property type="match status" value="1"/>
</dbReference>
<dbReference type="SUPFAM" id="SSF48371">
    <property type="entry name" value="ARM repeat"/>
    <property type="match status" value="2"/>
</dbReference>
<dbReference type="SUPFAM" id="SSF57850">
    <property type="entry name" value="RING/U-box"/>
    <property type="match status" value="1"/>
</dbReference>
<dbReference type="PROSITE" id="PS51698">
    <property type="entry name" value="U_BOX"/>
    <property type="match status" value="1"/>
</dbReference>